<comment type="function">
    <text>Probable cyclic nucleotide-gated ion channel.</text>
</comment>
<comment type="subunit">
    <text evidence="6">Homotetramer or heterotetramer.</text>
</comment>
<comment type="subcellular location">
    <subcellularLocation>
        <location evidence="6">Cell membrane</location>
        <topology evidence="6">Multi-pass membrane protein</topology>
    </subcellularLocation>
</comment>
<comment type="alternative products">
    <event type="alternative splicing"/>
    <isoform>
        <id>Q9LNJ0-1</id>
        <name>1</name>
        <sequence type="displayed"/>
    </isoform>
    <isoform>
        <id>Q9LNJ0-2</id>
        <name>2</name>
        <sequence type="described" ref="VSP_008988"/>
    </isoform>
</comment>
<comment type="domain">
    <text evidence="1">The binding of calmodulin to the C-terminus might interfere with cyclic nucleotide binding and thus channel activation.</text>
</comment>
<comment type="miscellaneous">
    <molecule>Isoform 2</molecule>
    <text evidence="6">May be due to an intron retention.</text>
</comment>
<comment type="similarity">
    <text evidence="6">Belongs to the cyclic nucleotide-gated cation channel (TC 1.A.1.5) family.</text>
</comment>
<comment type="sequence caution" evidence="6">
    <conflict type="erroneous gene model prediction">
        <sequence resource="EMBL-CDS" id="AAF97331"/>
    </conflict>
</comment>
<gene>
    <name type="primary">CNGC10</name>
    <name type="synonym">ACBK1</name>
    <name type="ordered locus">At1g01340</name>
    <name type="ORF">F6F3.13</name>
</gene>
<name>CNG10_ARATH</name>
<organism>
    <name type="scientific">Arabidopsis thaliana</name>
    <name type="common">Mouse-ear cress</name>
    <dbReference type="NCBI Taxonomy" id="3702"/>
    <lineage>
        <taxon>Eukaryota</taxon>
        <taxon>Viridiplantae</taxon>
        <taxon>Streptophyta</taxon>
        <taxon>Embryophyta</taxon>
        <taxon>Tracheophyta</taxon>
        <taxon>Spermatophyta</taxon>
        <taxon>Magnoliopsida</taxon>
        <taxon>eudicotyledons</taxon>
        <taxon>Gunneridae</taxon>
        <taxon>Pentapetalae</taxon>
        <taxon>rosids</taxon>
        <taxon>malvids</taxon>
        <taxon>Brassicales</taxon>
        <taxon>Brassicaceae</taxon>
        <taxon>Camelineae</taxon>
        <taxon>Arabidopsis</taxon>
    </lineage>
</organism>
<accession>Q9LNJ0</accession>
<accession>Q9LKL3</accession>
<dbReference type="EMBL" id="AF272002">
    <property type="protein sequence ID" value="AAF76224.3"/>
    <property type="molecule type" value="mRNA"/>
</dbReference>
<dbReference type="EMBL" id="AC023628">
    <property type="protein sequence ID" value="AAF97331.1"/>
    <property type="status" value="ALT_SEQ"/>
    <property type="molecule type" value="Genomic_DNA"/>
</dbReference>
<dbReference type="EMBL" id="CP002684">
    <property type="protein sequence ID" value="AEE27273.1"/>
    <property type="molecule type" value="Genomic_DNA"/>
</dbReference>
<dbReference type="EMBL" id="CP002684">
    <property type="protein sequence ID" value="AEE27274.1"/>
    <property type="molecule type" value="Genomic_DNA"/>
</dbReference>
<dbReference type="PIR" id="F86143">
    <property type="entry name" value="F86143"/>
</dbReference>
<dbReference type="RefSeq" id="NP_001184885.1">
    <molecule id="Q9LNJ0-1"/>
    <property type="nucleotide sequence ID" value="NM_001197956.2"/>
</dbReference>
<dbReference type="RefSeq" id="NP_563625.1">
    <molecule id="Q9LNJ0-2"/>
    <property type="nucleotide sequence ID" value="NM_100016.3"/>
</dbReference>
<dbReference type="BioGRID" id="24071">
    <property type="interactions" value="34"/>
</dbReference>
<dbReference type="FunCoup" id="Q9LNJ0">
    <property type="interactions" value="202"/>
</dbReference>
<dbReference type="STRING" id="3702.Q9LNJ0"/>
<dbReference type="PaxDb" id="3702-AT1G01340.2"/>
<dbReference type="ProteomicsDB" id="220392">
    <molecule id="Q9LNJ0-1"/>
</dbReference>
<dbReference type="EnsemblPlants" id="AT1G01340.1">
    <molecule id="Q9LNJ0-2"/>
    <property type="protein sequence ID" value="AT1G01340.1"/>
    <property type="gene ID" value="AT1G01340"/>
</dbReference>
<dbReference type="EnsemblPlants" id="AT1G01340.2">
    <molecule id="Q9LNJ0-1"/>
    <property type="protein sequence ID" value="AT1G01340.2"/>
    <property type="gene ID" value="AT1G01340"/>
</dbReference>
<dbReference type="GeneID" id="838832"/>
<dbReference type="Gramene" id="AT1G01340.1">
    <molecule id="Q9LNJ0-2"/>
    <property type="protein sequence ID" value="AT1G01340.1"/>
    <property type="gene ID" value="AT1G01340"/>
</dbReference>
<dbReference type="Gramene" id="AT1G01340.2">
    <molecule id="Q9LNJ0-1"/>
    <property type="protein sequence ID" value="AT1G01340.2"/>
    <property type="gene ID" value="AT1G01340"/>
</dbReference>
<dbReference type="KEGG" id="ath:AT1G01340"/>
<dbReference type="Araport" id="AT1G01340"/>
<dbReference type="TAIR" id="AT1G01340">
    <property type="gene designation" value="CNGC10"/>
</dbReference>
<dbReference type="eggNOG" id="KOG0498">
    <property type="taxonomic scope" value="Eukaryota"/>
</dbReference>
<dbReference type="InParanoid" id="Q9LNJ0"/>
<dbReference type="OMA" id="QMVILAM"/>
<dbReference type="OrthoDB" id="421226at2759"/>
<dbReference type="PhylomeDB" id="Q9LNJ0"/>
<dbReference type="PRO" id="PR:Q9LNJ0"/>
<dbReference type="Proteomes" id="UP000006548">
    <property type="component" value="Chromosome 1"/>
</dbReference>
<dbReference type="ExpressionAtlas" id="Q9LNJ0">
    <property type="expression patterns" value="baseline and differential"/>
</dbReference>
<dbReference type="GO" id="GO:0005886">
    <property type="term" value="C:plasma membrane"/>
    <property type="evidence" value="ECO:0007669"/>
    <property type="project" value="UniProtKB-SubCell"/>
</dbReference>
<dbReference type="GO" id="GO:0005516">
    <property type="term" value="F:calmodulin binding"/>
    <property type="evidence" value="ECO:0007669"/>
    <property type="project" value="UniProtKB-KW"/>
</dbReference>
<dbReference type="GO" id="GO:0030552">
    <property type="term" value="F:cAMP binding"/>
    <property type="evidence" value="ECO:0007669"/>
    <property type="project" value="UniProtKB-KW"/>
</dbReference>
<dbReference type="GO" id="GO:0030553">
    <property type="term" value="F:cGMP binding"/>
    <property type="evidence" value="ECO:0007669"/>
    <property type="project" value="UniProtKB-KW"/>
</dbReference>
<dbReference type="GO" id="GO:0005216">
    <property type="term" value="F:monoatomic ion channel activity"/>
    <property type="evidence" value="ECO:0007669"/>
    <property type="project" value="InterPro"/>
</dbReference>
<dbReference type="GO" id="GO:0009617">
    <property type="term" value="P:response to bacterium"/>
    <property type="evidence" value="ECO:0000270"/>
    <property type="project" value="TAIR"/>
</dbReference>
<dbReference type="GO" id="GO:0051592">
    <property type="term" value="P:response to calcium ion"/>
    <property type="evidence" value="ECO:0000270"/>
    <property type="project" value="TAIR"/>
</dbReference>
<dbReference type="CDD" id="cd00038">
    <property type="entry name" value="CAP_ED"/>
    <property type="match status" value="1"/>
</dbReference>
<dbReference type="FunFam" id="1.10.287.630:FF:000003">
    <property type="entry name" value="Cyclic nucleotide-gated ion channel 1"/>
    <property type="match status" value="1"/>
</dbReference>
<dbReference type="FunFam" id="2.60.120.10:FF:000024">
    <property type="entry name" value="Cyclic nucleotide-gated ion channel 1"/>
    <property type="match status" value="1"/>
</dbReference>
<dbReference type="Gene3D" id="1.10.287.70">
    <property type="match status" value="1"/>
</dbReference>
<dbReference type="Gene3D" id="1.10.287.630">
    <property type="entry name" value="Helix hairpin bin"/>
    <property type="match status" value="1"/>
</dbReference>
<dbReference type="Gene3D" id="2.60.120.10">
    <property type="entry name" value="Jelly Rolls"/>
    <property type="match status" value="1"/>
</dbReference>
<dbReference type="InterPro" id="IPR000595">
    <property type="entry name" value="cNMP-bd_dom"/>
</dbReference>
<dbReference type="InterPro" id="IPR018490">
    <property type="entry name" value="cNMP-bd_dom_sf"/>
</dbReference>
<dbReference type="InterPro" id="IPR005821">
    <property type="entry name" value="Ion_trans_dom"/>
</dbReference>
<dbReference type="InterPro" id="IPR014710">
    <property type="entry name" value="RmlC-like_jellyroll"/>
</dbReference>
<dbReference type="PANTHER" id="PTHR45651:SF110">
    <property type="entry name" value="CYCLIC NUCLEOTIDE-GATED ION CHANNEL 10-RELATED"/>
    <property type="match status" value="1"/>
</dbReference>
<dbReference type="PANTHER" id="PTHR45651">
    <property type="entry name" value="CYCLIC NUCLEOTIDE-GATED ION CHANNEL 15-RELATED-RELATED"/>
    <property type="match status" value="1"/>
</dbReference>
<dbReference type="Pfam" id="PF00520">
    <property type="entry name" value="Ion_trans"/>
    <property type="match status" value="1"/>
</dbReference>
<dbReference type="SMART" id="SM00100">
    <property type="entry name" value="cNMP"/>
    <property type="match status" value="1"/>
</dbReference>
<dbReference type="SUPFAM" id="SSF51206">
    <property type="entry name" value="cAMP-binding domain-like"/>
    <property type="match status" value="1"/>
</dbReference>
<dbReference type="SUPFAM" id="SSF81324">
    <property type="entry name" value="Voltage-gated potassium channels"/>
    <property type="match status" value="1"/>
</dbReference>
<dbReference type="PROSITE" id="PS50042">
    <property type="entry name" value="CNMP_BINDING_3"/>
    <property type="match status" value="1"/>
</dbReference>
<dbReference type="PROSITE" id="PS50096">
    <property type="entry name" value="IQ"/>
    <property type="match status" value="1"/>
</dbReference>
<protein>
    <recommendedName>
        <fullName>Probable cyclic nucleotide-gated ion channel 10</fullName>
    </recommendedName>
    <alternativeName>
        <fullName>CaM-regulated potassium ion channel</fullName>
    </alternativeName>
    <alternativeName>
        <fullName>Cyclic nucleotide- and calmodulin-regulated ion channel 10</fullName>
    </alternativeName>
</protein>
<sequence length="711" mass="81895">MAFSHDNRVRFKDEGKPLSSEYGYGRKARPSLDRVFKNVKWGFKKPLSFPSHKDPDHKETSSVTRKNIINPQDSFLQNWNKIFLFACVVALAIDPLFFYIPIVDSARHCLTLDSKLEIAASLLRTLIDAFYIIHIVFQFRTAYIAPSSRVFGRGELVDDAKAIALKYLSSYFIIDLLSILPLPQIVVLAVIPSVNQPVSLLTKDYLKFSIIAQYVPRILRMYPLYTEVTRTSGIVTETAWAGAAWNLSLYMLASHVFGALWYLISVEREDRCWQEACEKTKGCNMKFLYCENDRNVSNNFLTTSCPFLDPGDITNSTIFNFGIFTDALKSGVVESHDFWKKFFYCFWWGLRNLSALGQNLQTSKFVGEIIFAISICISGLVLFALLIGNMQKYLESTTVREEEMRVRKRDAEQWMSHRMLPEDLRKRIRRYEQYRWQETRGVEEETLLRNLPKDLRRDIKRHLCLDLLKKVPLFEIMDEQLLDAVCDRLRPVLYTENSYVIREGDPVGEMLFVMRGRLVSATTNGGRSGFFNAVNLKASDFCGEDLLPWALDPQSSSHFPISTRTVQALTEVEAFALTAEDLKSVASQFRRLHSKQLQHTFRFYSVQWRTWSVSFIQAAWRRYCRRKLAKSLRDEEDRLREALASQDKEHNAATVSSSLSLGGALYASRFASNALHNLRHNISNLPPRYTLPLLPQKPTEPDFTANHTTDP</sequence>
<evidence type="ECO:0000250" key="1"/>
<evidence type="ECO:0000255" key="2"/>
<evidence type="ECO:0000255" key="3">
    <source>
        <dbReference type="PROSITE-ProRule" id="PRU00116"/>
    </source>
</evidence>
<evidence type="ECO:0000256" key="4">
    <source>
        <dbReference type="SAM" id="MobiDB-lite"/>
    </source>
</evidence>
<evidence type="ECO:0000303" key="5">
    <source ref="1"/>
</evidence>
<evidence type="ECO:0000305" key="6"/>
<proteinExistence type="evidence at transcript level"/>
<keyword id="KW-0025">Alternative splicing</keyword>
<keyword id="KW-0112">Calmodulin-binding</keyword>
<keyword id="KW-0114">cAMP</keyword>
<keyword id="KW-0116">cAMP-binding</keyword>
<keyword id="KW-1003">Cell membrane</keyword>
<keyword id="KW-0140">cGMP</keyword>
<keyword id="KW-0142">cGMP-binding</keyword>
<keyword id="KW-0407">Ion channel</keyword>
<keyword id="KW-0406">Ion transport</keyword>
<keyword id="KW-1071">Ligand-gated ion channel</keyword>
<keyword id="KW-0472">Membrane</keyword>
<keyword id="KW-0547">Nucleotide-binding</keyword>
<keyword id="KW-1185">Reference proteome</keyword>
<keyword id="KW-0812">Transmembrane</keyword>
<keyword id="KW-1133">Transmembrane helix</keyword>
<keyword id="KW-0813">Transport</keyword>
<reference key="1">
    <citation type="submission" date="2003-07" db="EMBL/GenBank/DDBJ databases">
        <title>CaM-regulated potassium ion channel.</title>
        <authorList>
            <person name="Li X."/>
            <person name="Dharmasiri M.A."/>
            <person name="Harrington M.H."/>
        </authorList>
    </citation>
    <scope>NUCLEOTIDE SEQUENCE [MRNA] (ISOFORM 2)</scope>
</reference>
<reference key="2">
    <citation type="journal article" date="2000" name="Nature">
        <title>Sequence and analysis of chromosome 1 of the plant Arabidopsis thaliana.</title>
        <authorList>
            <person name="Theologis A."/>
            <person name="Ecker J.R."/>
            <person name="Palm C.J."/>
            <person name="Federspiel N.A."/>
            <person name="Kaul S."/>
            <person name="White O."/>
            <person name="Alonso J."/>
            <person name="Altafi H."/>
            <person name="Araujo R."/>
            <person name="Bowman C.L."/>
            <person name="Brooks S.Y."/>
            <person name="Buehler E."/>
            <person name="Chan A."/>
            <person name="Chao Q."/>
            <person name="Chen H."/>
            <person name="Cheuk R.F."/>
            <person name="Chin C.W."/>
            <person name="Chung M.K."/>
            <person name="Conn L."/>
            <person name="Conway A.B."/>
            <person name="Conway A.R."/>
            <person name="Creasy T.H."/>
            <person name="Dewar K."/>
            <person name="Dunn P."/>
            <person name="Etgu P."/>
            <person name="Feldblyum T.V."/>
            <person name="Feng J.-D."/>
            <person name="Fong B."/>
            <person name="Fujii C.Y."/>
            <person name="Gill J.E."/>
            <person name="Goldsmith A.D."/>
            <person name="Haas B."/>
            <person name="Hansen N.F."/>
            <person name="Hughes B."/>
            <person name="Huizar L."/>
            <person name="Hunter J.L."/>
            <person name="Jenkins J."/>
            <person name="Johnson-Hopson C."/>
            <person name="Khan S."/>
            <person name="Khaykin E."/>
            <person name="Kim C.J."/>
            <person name="Koo H.L."/>
            <person name="Kremenetskaia I."/>
            <person name="Kurtz D.B."/>
            <person name="Kwan A."/>
            <person name="Lam B."/>
            <person name="Langin-Hooper S."/>
            <person name="Lee A."/>
            <person name="Lee J.M."/>
            <person name="Lenz C.A."/>
            <person name="Li J.H."/>
            <person name="Li Y.-P."/>
            <person name="Lin X."/>
            <person name="Liu S.X."/>
            <person name="Liu Z.A."/>
            <person name="Luros J.S."/>
            <person name="Maiti R."/>
            <person name="Marziali A."/>
            <person name="Militscher J."/>
            <person name="Miranda M."/>
            <person name="Nguyen M."/>
            <person name="Nierman W.C."/>
            <person name="Osborne B.I."/>
            <person name="Pai G."/>
            <person name="Peterson J."/>
            <person name="Pham P.K."/>
            <person name="Rizzo M."/>
            <person name="Rooney T."/>
            <person name="Rowley D."/>
            <person name="Sakano H."/>
            <person name="Salzberg S.L."/>
            <person name="Schwartz J.R."/>
            <person name="Shinn P."/>
            <person name="Southwick A.M."/>
            <person name="Sun H."/>
            <person name="Tallon L.J."/>
            <person name="Tambunga G."/>
            <person name="Toriumi M.J."/>
            <person name="Town C.D."/>
            <person name="Utterback T."/>
            <person name="Van Aken S."/>
            <person name="Vaysberg M."/>
            <person name="Vysotskaia V.S."/>
            <person name="Walker M."/>
            <person name="Wu D."/>
            <person name="Yu G."/>
            <person name="Fraser C.M."/>
            <person name="Venter J.C."/>
            <person name="Davis R.W."/>
        </authorList>
    </citation>
    <scope>NUCLEOTIDE SEQUENCE [LARGE SCALE GENOMIC DNA]</scope>
    <source>
        <strain>cv. Columbia</strain>
    </source>
</reference>
<reference key="3">
    <citation type="journal article" date="2017" name="Plant J.">
        <title>Araport11: a complete reannotation of the Arabidopsis thaliana reference genome.</title>
        <authorList>
            <person name="Cheng C.Y."/>
            <person name="Krishnakumar V."/>
            <person name="Chan A.P."/>
            <person name="Thibaud-Nissen F."/>
            <person name="Schobel S."/>
            <person name="Town C.D."/>
        </authorList>
    </citation>
    <scope>GENOME REANNOTATION</scope>
    <source>
        <strain>cv. Columbia</strain>
    </source>
</reference>
<reference key="4">
    <citation type="journal article" date="2001" name="Plant Physiol.">
        <title>Phylogenetic relationships within cation transporter families of Arabidopsis.</title>
        <authorList>
            <person name="Maeser P."/>
            <person name="Thomine S."/>
            <person name="Schroeder J.I."/>
            <person name="Ward J.M."/>
            <person name="Hirschi K."/>
            <person name="Sze H."/>
            <person name="Talke I.N."/>
            <person name="Amtmann A."/>
            <person name="Maathuis F.J.M."/>
            <person name="Sanders D."/>
            <person name="Harper J.F."/>
            <person name="Tchieu J."/>
            <person name="Gribskov M."/>
            <person name="Persans M.W."/>
            <person name="Salt D.E."/>
            <person name="Kim S.A."/>
            <person name="Guerinot M.L."/>
        </authorList>
    </citation>
    <scope>GENE FAMILY</scope>
    <scope>NOMENCLATURE</scope>
</reference>
<feature type="chain" id="PRO_0000219338" description="Probable cyclic nucleotide-gated ion channel 10">
    <location>
        <begin position="1"/>
        <end position="711"/>
    </location>
</feature>
<feature type="topological domain" description="Cytoplasmic" evidence="2">
    <location>
        <begin position="1"/>
        <end position="81"/>
    </location>
</feature>
<feature type="transmembrane region" description="Helical; Name=H1" evidence="2">
    <location>
        <begin position="82"/>
        <end position="102"/>
    </location>
</feature>
<feature type="topological domain" description="Extracellular" evidence="2">
    <location>
        <begin position="103"/>
        <end position="116"/>
    </location>
</feature>
<feature type="transmembrane region" description="Helical; Name=H2" evidence="2">
    <location>
        <begin position="117"/>
        <end position="137"/>
    </location>
</feature>
<feature type="topological domain" description="Cytoplasmic" evidence="2">
    <location>
        <begin position="138"/>
        <end position="170"/>
    </location>
</feature>
<feature type="transmembrane region" description="Helical; Name=H3" evidence="2">
    <location>
        <begin position="171"/>
        <end position="191"/>
    </location>
</feature>
<feature type="topological domain" description="Extracellular" evidence="2">
    <location>
        <begin position="192"/>
        <end position="204"/>
    </location>
</feature>
<feature type="transmembrane region" description="Helical; Name=H4" evidence="2">
    <location>
        <begin position="205"/>
        <end position="225"/>
    </location>
</feature>
<feature type="topological domain" description="Cytoplasmic" evidence="2">
    <location>
        <begin position="226"/>
        <end position="243"/>
    </location>
</feature>
<feature type="transmembrane region" description="Helical; Name=H5" evidence="2">
    <location>
        <begin position="244"/>
        <end position="264"/>
    </location>
</feature>
<feature type="topological domain" description="Extracellular" evidence="2">
    <location>
        <begin position="265"/>
        <end position="366"/>
    </location>
</feature>
<feature type="transmembrane region" description="Helical; Name=H6" evidence="2">
    <location>
        <begin position="367"/>
        <end position="387"/>
    </location>
</feature>
<feature type="topological domain" description="Cytoplasmic" evidence="2">
    <location>
        <begin position="388"/>
        <end position="711"/>
    </location>
</feature>
<feature type="domain" description="IQ" evidence="3">
    <location>
        <begin position="609"/>
        <end position="638"/>
    </location>
</feature>
<feature type="region of interest" description="Calmodulin-binding" evidence="1">
    <location>
        <begin position="589"/>
        <end position="604"/>
    </location>
</feature>
<feature type="region of interest" description="Disordered" evidence="4">
    <location>
        <begin position="689"/>
        <end position="711"/>
    </location>
</feature>
<feature type="binding site">
    <location>
        <begin position="473"/>
        <end position="603"/>
    </location>
    <ligand>
        <name>a nucleoside 3',5'-cyclic phosphate</name>
        <dbReference type="ChEBI" id="CHEBI:58464"/>
    </ligand>
</feature>
<feature type="binding site" evidence="1">
    <location>
        <position position="544"/>
    </location>
    <ligand>
        <name>a nucleoside 3',5'-cyclic phosphate</name>
        <dbReference type="ChEBI" id="CHEBI:58464"/>
    </ligand>
</feature>
<feature type="splice variant" id="VSP_008988" description="In isoform 2." evidence="5">
    <original>MAFSHDNRV</original>
    <variation>MILF</variation>
    <location>
        <begin position="1"/>
        <end position="9"/>
    </location>
</feature>